<protein>
    <recommendedName>
        <fullName>Ovomucoid</fullName>
    </recommendedName>
</protein>
<proteinExistence type="evidence at protein level"/>
<organism>
    <name type="scientific">Francolinus pondicerianus</name>
    <name type="common">Grey francolin</name>
    <name type="synonym">Tetrao pondicerianus</name>
    <dbReference type="NCBI Taxonomy" id="9019"/>
    <lineage>
        <taxon>Eukaryota</taxon>
        <taxon>Metazoa</taxon>
        <taxon>Chordata</taxon>
        <taxon>Craniata</taxon>
        <taxon>Vertebrata</taxon>
        <taxon>Euteleostomi</taxon>
        <taxon>Archelosauria</taxon>
        <taxon>Archosauria</taxon>
        <taxon>Dinosauria</taxon>
        <taxon>Saurischia</taxon>
        <taxon>Theropoda</taxon>
        <taxon>Coelurosauria</taxon>
        <taxon>Aves</taxon>
        <taxon>Neognathae</taxon>
        <taxon>Galloanserae</taxon>
        <taxon>Galliformes</taxon>
        <taxon>Phasianidae</taxon>
        <taxon>Perdicinae</taxon>
        <taxon>Francolinus</taxon>
    </lineage>
</organism>
<comment type="subcellular location">
    <subcellularLocation>
        <location>Secreted</location>
    </subcellularLocation>
</comment>
<comment type="domain">
    <text>Avian ovomucoid consists of three homologous, tandem Kazal family inhibitory domains.</text>
</comment>
<keyword id="KW-0903">Direct protein sequencing</keyword>
<keyword id="KW-1015">Disulfide bond</keyword>
<keyword id="KW-0325">Glycoprotein</keyword>
<keyword id="KW-0646">Protease inhibitor</keyword>
<keyword id="KW-0677">Repeat</keyword>
<keyword id="KW-0964">Secreted</keyword>
<keyword id="KW-0722">Serine protease inhibitor</keyword>
<name>IOVO_FRAPO</name>
<reference key="1">
    <citation type="journal article" date="1987" name="Biochemistry">
        <title>Ovomucoid third domains from 100 avian species: isolation, sequences, and hypervariability of enzyme-inhibitor contact residues.</title>
        <authorList>
            <person name="Laskowski M. Jr."/>
            <person name="Kato I."/>
            <person name="Ardelt W."/>
            <person name="Cook J."/>
            <person name="Denton A."/>
            <person name="Empie M.W."/>
            <person name="Kohr W.J."/>
            <person name="Park S.J."/>
            <person name="Parks K."/>
            <person name="Schatzley B.L."/>
            <person name="Schoenberger O.L."/>
            <person name="Tashiro M."/>
            <person name="Vichot G."/>
            <person name="Whatley H.E."/>
            <person name="Wieczorek A."/>
            <person name="Wieczorek M."/>
        </authorList>
    </citation>
    <scope>PROTEIN SEQUENCE</scope>
</reference>
<sequence>LPAVSVDCSEYPKPDCTTEERPLCGSDNKTYGNKCNFCNAVVESNGTLTLSHFGKC</sequence>
<evidence type="ECO:0000255" key="1">
    <source>
        <dbReference type="PROSITE-ProRule" id="PRU00798"/>
    </source>
</evidence>
<dbReference type="PIR" id="B31441">
    <property type="entry name" value="B31441"/>
</dbReference>
<dbReference type="BMRB" id="P05598"/>
<dbReference type="SMR" id="P05598"/>
<dbReference type="GO" id="GO:0005576">
    <property type="term" value="C:extracellular region"/>
    <property type="evidence" value="ECO:0007669"/>
    <property type="project" value="UniProtKB-SubCell"/>
</dbReference>
<dbReference type="GO" id="GO:0004867">
    <property type="term" value="F:serine-type endopeptidase inhibitor activity"/>
    <property type="evidence" value="ECO:0007669"/>
    <property type="project" value="UniProtKB-KW"/>
</dbReference>
<dbReference type="CDD" id="cd00104">
    <property type="entry name" value="KAZAL_FS"/>
    <property type="match status" value="1"/>
</dbReference>
<dbReference type="FunFam" id="3.30.60.30:FF:000037">
    <property type="entry name" value="Ovomucoid"/>
    <property type="match status" value="1"/>
</dbReference>
<dbReference type="Gene3D" id="3.30.60.30">
    <property type="match status" value="1"/>
</dbReference>
<dbReference type="InterPro" id="IPR051597">
    <property type="entry name" value="Bifunctional_prot_inhibitor"/>
</dbReference>
<dbReference type="InterPro" id="IPR002350">
    <property type="entry name" value="Kazal_dom"/>
</dbReference>
<dbReference type="InterPro" id="IPR036058">
    <property type="entry name" value="Kazal_dom_sf"/>
</dbReference>
<dbReference type="PANTHER" id="PTHR47729:SF1">
    <property type="entry name" value="OVOMUCOID-LIKE-RELATED"/>
    <property type="match status" value="1"/>
</dbReference>
<dbReference type="PANTHER" id="PTHR47729">
    <property type="entry name" value="SERINE PEPTIDASE INHIBITOR, KAZAL TYPE 2, TANDEM DUPLICATE 1-RELATED"/>
    <property type="match status" value="1"/>
</dbReference>
<dbReference type="Pfam" id="PF00050">
    <property type="entry name" value="Kazal_1"/>
    <property type="match status" value="1"/>
</dbReference>
<dbReference type="SMART" id="SM00280">
    <property type="entry name" value="KAZAL"/>
    <property type="match status" value="1"/>
</dbReference>
<dbReference type="SUPFAM" id="SSF100895">
    <property type="entry name" value="Kazal-type serine protease inhibitors"/>
    <property type="match status" value="1"/>
</dbReference>
<dbReference type="PROSITE" id="PS00282">
    <property type="entry name" value="KAZAL_1"/>
    <property type="match status" value="1"/>
</dbReference>
<dbReference type="PROSITE" id="PS51465">
    <property type="entry name" value="KAZAL_2"/>
    <property type="match status" value="1"/>
</dbReference>
<accession>P05598</accession>
<feature type="chain" id="PRO_0000073112" description="Ovomucoid">
    <location>
        <begin position="1" status="less than"/>
        <end position="56" status="greater than"/>
    </location>
</feature>
<feature type="domain" description="Kazal-like" evidence="1">
    <location>
        <begin position="6"/>
        <end position="56"/>
    </location>
</feature>
<feature type="site" description="Reactive bond 3">
    <location>
        <begin position="18"/>
        <end position="19"/>
    </location>
</feature>
<feature type="glycosylation site" description="N-linked (GlcNAc...) asparagine">
    <location>
        <position position="45"/>
    </location>
</feature>
<feature type="disulfide bond">
    <location>
        <begin position="8"/>
        <end position="38"/>
    </location>
</feature>
<feature type="disulfide bond">
    <location>
        <begin position="16"/>
        <end position="35"/>
    </location>
</feature>
<feature type="disulfide bond">
    <location>
        <begin position="24"/>
        <end position="56"/>
    </location>
</feature>
<feature type="non-terminal residue">
    <location>
        <position position="1"/>
    </location>
</feature>
<feature type="non-terminal residue">
    <location>
        <position position="56"/>
    </location>
</feature>